<reference key="1">
    <citation type="journal article" date="1995" name="Yeast">
        <title>Sequence and functional analysis of a 7.2 kb fragment of Saccharomyces cerevisiae chromosome II including GAL7 and GAL10 and a new essential open reading frame.</title>
        <authorList>
            <person name="Schaaff-Gerstenschlaeger I."/>
            <person name="Schindwolf T."/>
            <person name="Lehnert W."/>
            <person name="Rose M."/>
            <person name="Zimmermann F.K."/>
        </authorList>
    </citation>
    <scope>NUCLEOTIDE SEQUENCE [GENOMIC DNA]</scope>
    <source>
        <strain>ATCC 204508 / S288c</strain>
    </source>
</reference>
<reference key="2">
    <citation type="journal article" date="1994" name="EMBO J.">
        <title>Complete DNA sequence of yeast chromosome II.</title>
        <authorList>
            <person name="Feldmann H."/>
            <person name="Aigle M."/>
            <person name="Aljinovic G."/>
            <person name="Andre B."/>
            <person name="Baclet M.C."/>
            <person name="Barthe C."/>
            <person name="Baur A."/>
            <person name="Becam A.-M."/>
            <person name="Biteau N."/>
            <person name="Boles E."/>
            <person name="Brandt T."/>
            <person name="Brendel M."/>
            <person name="Brueckner M."/>
            <person name="Bussereau F."/>
            <person name="Christiansen C."/>
            <person name="Contreras R."/>
            <person name="Crouzet M."/>
            <person name="Cziepluch C."/>
            <person name="Demolis N."/>
            <person name="Delaveau T."/>
            <person name="Doignon F."/>
            <person name="Domdey H."/>
            <person name="Duesterhus S."/>
            <person name="Dubois E."/>
            <person name="Dujon B."/>
            <person name="El Bakkoury M."/>
            <person name="Entian K.-D."/>
            <person name="Feuermann M."/>
            <person name="Fiers W."/>
            <person name="Fobo G.M."/>
            <person name="Fritz C."/>
            <person name="Gassenhuber J."/>
            <person name="Glansdorff N."/>
            <person name="Goffeau A."/>
            <person name="Grivell L.A."/>
            <person name="de Haan M."/>
            <person name="Hein C."/>
            <person name="Herbert C.J."/>
            <person name="Hollenberg C.P."/>
            <person name="Holmstroem K."/>
            <person name="Jacq C."/>
            <person name="Jacquet M."/>
            <person name="Jauniaux J.-C."/>
            <person name="Jonniaux J.-L."/>
            <person name="Kallesoee T."/>
            <person name="Kiesau P."/>
            <person name="Kirchrath L."/>
            <person name="Koetter P."/>
            <person name="Korol S."/>
            <person name="Liebl S."/>
            <person name="Logghe M."/>
            <person name="Lohan A.J.E."/>
            <person name="Louis E.J."/>
            <person name="Li Z.Y."/>
            <person name="Maat M.J."/>
            <person name="Mallet L."/>
            <person name="Mannhaupt G."/>
            <person name="Messenguy F."/>
            <person name="Miosga T."/>
            <person name="Molemans F."/>
            <person name="Mueller S."/>
            <person name="Nasr F."/>
            <person name="Obermaier B."/>
            <person name="Perea J."/>
            <person name="Pierard A."/>
            <person name="Piravandi E."/>
            <person name="Pohl F.M."/>
            <person name="Pohl T.M."/>
            <person name="Potier S."/>
            <person name="Proft M."/>
            <person name="Purnelle B."/>
            <person name="Ramezani Rad M."/>
            <person name="Rieger M."/>
            <person name="Rose M."/>
            <person name="Schaaff-Gerstenschlaeger I."/>
            <person name="Scherens B."/>
            <person name="Schwarzlose C."/>
            <person name="Skala J."/>
            <person name="Slonimski P.P."/>
            <person name="Smits P.H.M."/>
            <person name="Souciet J.-L."/>
            <person name="Steensma H.Y."/>
            <person name="Stucka R."/>
            <person name="Urrestarazu L.A."/>
            <person name="van der Aart Q.J.M."/>
            <person name="Van Dyck L."/>
            <person name="Vassarotti A."/>
            <person name="Vetter I."/>
            <person name="Vierendeels F."/>
            <person name="Vissers S."/>
            <person name="Wagner G."/>
            <person name="de Wergifosse P."/>
            <person name="Wolfe K.H."/>
            <person name="Zagulski M."/>
            <person name="Zimmermann F.K."/>
            <person name="Mewes H.-W."/>
            <person name="Kleine K."/>
        </authorList>
    </citation>
    <scope>NUCLEOTIDE SEQUENCE [LARGE SCALE GENOMIC DNA]</scope>
    <source>
        <strain>ATCC 204508 / S288c</strain>
    </source>
</reference>
<reference key="3">
    <citation type="journal article" date="2014" name="G3 (Bethesda)">
        <title>The reference genome sequence of Saccharomyces cerevisiae: Then and now.</title>
        <authorList>
            <person name="Engel S.R."/>
            <person name="Dietrich F.S."/>
            <person name="Fisk D.G."/>
            <person name="Binkley G."/>
            <person name="Balakrishnan R."/>
            <person name="Costanzo M.C."/>
            <person name="Dwight S.S."/>
            <person name="Hitz B.C."/>
            <person name="Karra K."/>
            <person name="Nash R.S."/>
            <person name="Weng S."/>
            <person name="Wong E.D."/>
            <person name="Lloyd P."/>
            <person name="Skrzypek M.S."/>
            <person name="Miyasato S.R."/>
            <person name="Simison M."/>
            <person name="Cherry J.M."/>
        </authorList>
    </citation>
    <scope>GENOME REANNOTATION</scope>
    <source>
        <strain>ATCC 204508 / S288c</strain>
    </source>
</reference>
<reference key="4">
    <citation type="journal article" date="1996" name="Science">
        <title>Kap104p: a karyopherin involved in the nuclear transport of messenger RNA binding proteins.</title>
        <authorList>
            <person name="Aitchison J.D."/>
            <person name="Blobel G."/>
            <person name="Rout M.P."/>
        </authorList>
    </citation>
    <scope>FUNCTION</scope>
    <scope>SUBCELLULAR LOCATION</scope>
    <scope>INTERACTION WITH NAB2; HRP1; NUP1; NUP100 AND NUP106</scope>
</reference>
<reference key="5">
    <citation type="journal article" date="1997" name="EMBO J.">
        <title>Yrb4p, a yeast ran-GTP-binding protein involved in import of ribosomal protein L25 into the nucleus.</title>
        <authorList>
            <person name="Schlenstedt G."/>
            <person name="Smirnova E."/>
            <person name="Deane R."/>
            <person name="Solsbacher J."/>
            <person name="Kutay U."/>
            <person name="Goerlich D."/>
            <person name="Ponstingl H."/>
            <person name="Bischoff F.R."/>
        </authorList>
    </citation>
    <scope>INTERACTION WITH GSP1</scope>
</reference>
<reference key="6">
    <citation type="journal article" date="1998" name="Mol. Cell. Biol.">
        <title>Identification and functional characterization of a novel nuclear localization signal present in the yeast Nab2 poly(A)+ RNA binding protein.</title>
        <authorList>
            <person name="Truant R."/>
            <person name="Fridell R.A."/>
            <person name="Benson R.E."/>
            <person name="Bogerd H."/>
            <person name="Cullen B.R."/>
        </authorList>
    </citation>
    <scope>FUNCTION</scope>
    <scope>INTERACTION WITH NAB2</scope>
</reference>
<reference key="7">
    <citation type="journal article" date="1999" name="J. Biol. Chem.">
        <title>Kap104p-mediated nuclear import. Nuclear localization signals in mRNA-binding proteins and the role of Ran and RNA.</title>
        <authorList>
            <person name="Lee D.C."/>
            <person name="Aitchison J.D."/>
        </authorList>
    </citation>
    <scope>FUNCTION</scope>
    <scope>INTERACTION WITH NAB2; HRP1 AND GSP1</scope>
</reference>
<reference key="8">
    <citation type="journal article" date="2001" name="Genome Biol.">
        <title>Importin-beta-like nuclear transport receptors.</title>
        <authorList>
            <person name="Stroem A.C."/>
            <person name="Weis K."/>
        </authorList>
    </citation>
    <scope>REVIEW</scope>
</reference>
<reference key="9">
    <citation type="journal article" date="2003" name="Nature">
        <title>Global analysis of protein expression in yeast.</title>
        <authorList>
            <person name="Ghaemmaghami S."/>
            <person name="Huh W.-K."/>
            <person name="Bower K."/>
            <person name="Howson R.W."/>
            <person name="Belle A."/>
            <person name="Dephoure N."/>
            <person name="O'Shea E.K."/>
            <person name="Weissman J.S."/>
        </authorList>
    </citation>
    <scope>LEVEL OF PROTEIN EXPRESSION [LARGE SCALE ANALYSIS]</scope>
</reference>
<reference key="10">
    <citation type="journal article" date="2009" name="J. Biol. Chem.">
        <title>Kap104p imports the PY-NLS-containing transcription factor Tfg2p into the nucleus.</title>
        <authorList>
            <person name="Suel K.E."/>
            <person name="Chook Y.M."/>
        </authorList>
    </citation>
    <scope>FUNCTION</scope>
    <scope>INTERACTION WITH TFG2</scope>
</reference>
<proteinExistence type="evidence at protein level"/>
<dbReference type="EMBL" id="X81324">
    <property type="protein sequence ID" value="CAA57104.1"/>
    <property type="molecule type" value="Genomic_DNA"/>
</dbReference>
<dbReference type="EMBL" id="Z35886">
    <property type="protein sequence ID" value="CAA84959.1"/>
    <property type="molecule type" value="Genomic_DNA"/>
</dbReference>
<dbReference type="EMBL" id="BK006936">
    <property type="protein sequence ID" value="DAA07139.1"/>
    <property type="molecule type" value="Genomic_DNA"/>
</dbReference>
<dbReference type="PIR" id="S45872">
    <property type="entry name" value="S45872"/>
</dbReference>
<dbReference type="RefSeq" id="NP_009573.1">
    <property type="nucleotide sequence ID" value="NM_001178365.1"/>
</dbReference>
<dbReference type="SMR" id="P38217"/>
<dbReference type="BioGRID" id="32720">
    <property type="interactions" value="272"/>
</dbReference>
<dbReference type="DIP" id="DIP-1399N"/>
<dbReference type="FunCoup" id="P38217">
    <property type="interactions" value="1419"/>
</dbReference>
<dbReference type="IntAct" id="P38217">
    <property type="interactions" value="124"/>
</dbReference>
<dbReference type="MINT" id="P38217"/>
<dbReference type="STRING" id="4932.YBR017C"/>
<dbReference type="PaxDb" id="4932-YBR017C"/>
<dbReference type="PeptideAtlas" id="P38217"/>
<dbReference type="EnsemblFungi" id="YBR017C_mRNA">
    <property type="protein sequence ID" value="YBR017C"/>
    <property type="gene ID" value="YBR017C"/>
</dbReference>
<dbReference type="GeneID" id="852305"/>
<dbReference type="KEGG" id="sce:YBR017C"/>
<dbReference type="AGR" id="SGD:S000000221"/>
<dbReference type="SGD" id="S000000221">
    <property type="gene designation" value="KAP104"/>
</dbReference>
<dbReference type="VEuPathDB" id="FungiDB:YBR017C"/>
<dbReference type="eggNOG" id="KOG2023">
    <property type="taxonomic scope" value="Eukaryota"/>
</dbReference>
<dbReference type="GeneTree" id="ENSGT00940000174661"/>
<dbReference type="HOGENOM" id="CLU_008136_1_1_1"/>
<dbReference type="InParanoid" id="P38217"/>
<dbReference type="OMA" id="AQEGAMS"/>
<dbReference type="OrthoDB" id="951172at2759"/>
<dbReference type="BioCyc" id="YEAST:G3O-29001-MONOMER"/>
<dbReference type="Reactome" id="R-SCE-450513">
    <property type="pathway name" value="Tristetraprolin (TTP, ZFP36) binds and destabilizes mRNA"/>
</dbReference>
<dbReference type="BioGRID-ORCS" id="852305">
    <property type="hits" value="4 hits in 10 CRISPR screens"/>
</dbReference>
<dbReference type="PRO" id="PR:P38217"/>
<dbReference type="Proteomes" id="UP000002311">
    <property type="component" value="Chromosome II"/>
</dbReference>
<dbReference type="RNAct" id="P38217">
    <property type="molecule type" value="protein"/>
</dbReference>
<dbReference type="GO" id="GO:0005935">
    <property type="term" value="C:cellular bud neck"/>
    <property type="evidence" value="ECO:0000314"/>
    <property type="project" value="SGD"/>
</dbReference>
<dbReference type="GO" id="GO:0005934">
    <property type="term" value="C:cellular bud tip"/>
    <property type="evidence" value="ECO:0000314"/>
    <property type="project" value="SGD"/>
</dbReference>
<dbReference type="GO" id="GO:0005737">
    <property type="term" value="C:cytoplasm"/>
    <property type="evidence" value="ECO:0000318"/>
    <property type="project" value="GO_Central"/>
</dbReference>
<dbReference type="GO" id="GO:0005829">
    <property type="term" value="C:cytosol"/>
    <property type="evidence" value="ECO:0000314"/>
    <property type="project" value="SGD"/>
</dbReference>
<dbReference type="GO" id="GO:0005643">
    <property type="term" value="C:nuclear pore"/>
    <property type="evidence" value="ECO:0007669"/>
    <property type="project" value="UniProtKB-SubCell"/>
</dbReference>
<dbReference type="GO" id="GO:0005634">
    <property type="term" value="C:nucleus"/>
    <property type="evidence" value="ECO:0000318"/>
    <property type="project" value="GO_Central"/>
</dbReference>
<dbReference type="GO" id="GO:0061608">
    <property type="term" value="F:nuclear import signal receptor activity"/>
    <property type="evidence" value="ECO:0000318"/>
    <property type="project" value="GO_Central"/>
</dbReference>
<dbReference type="GO" id="GO:0008139">
    <property type="term" value="F:nuclear localization sequence binding"/>
    <property type="evidence" value="ECO:0000314"/>
    <property type="project" value="SGD"/>
</dbReference>
<dbReference type="GO" id="GO:0010458">
    <property type="term" value="P:exit from mitosis"/>
    <property type="evidence" value="ECO:0000315"/>
    <property type="project" value="SGD"/>
</dbReference>
<dbReference type="GO" id="GO:0051028">
    <property type="term" value="P:mRNA transport"/>
    <property type="evidence" value="ECO:0007669"/>
    <property type="project" value="UniProtKB-KW"/>
</dbReference>
<dbReference type="GO" id="GO:0006606">
    <property type="term" value="P:protein import into nucleus"/>
    <property type="evidence" value="ECO:0000314"/>
    <property type="project" value="SGD"/>
</dbReference>
<dbReference type="Gene3D" id="1.25.10.10">
    <property type="entry name" value="Leucine-rich Repeat Variant"/>
    <property type="match status" value="1"/>
</dbReference>
<dbReference type="InterPro" id="IPR011989">
    <property type="entry name" value="ARM-like"/>
</dbReference>
<dbReference type="InterPro" id="IPR016024">
    <property type="entry name" value="ARM-type_fold"/>
</dbReference>
<dbReference type="InterPro" id="IPR000357">
    <property type="entry name" value="HEAT"/>
</dbReference>
<dbReference type="InterPro" id="IPR040122">
    <property type="entry name" value="Importin_beta"/>
</dbReference>
<dbReference type="PANTHER" id="PTHR10527">
    <property type="entry name" value="IMPORTIN BETA"/>
    <property type="match status" value="1"/>
</dbReference>
<dbReference type="Pfam" id="PF02985">
    <property type="entry name" value="HEAT"/>
    <property type="match status" value="1"/>
</dbReference>
<dbReference type="Pfam" id="PF13513">
    <property type="entry name" value="HEAT_EZ"/>
    <property type="match status" value="1"/>
</dbReference>
<dbReference type="SUPFAM" id="SSF48371">
    <property type="entry name" value="ARM repeat"/>
    <property type="match status" value="1"/>
</dbReference>
<evidence type="ECO:0000250" key="1">
    <source>
        <dbReference type="UniProtKB" id="Q92973"/>
    </source>
</evidence>
<evidence type="ECO:0000256" key="2">
    <source>
        <dbReference type="SAM" id="MobiDB-lite"/>
    </source>
</evidence>
<evidence type="ECO:0000269" key="3">
    <source>
    </source>
</evidence>
<evidence type="ECO:0000269" key="4">
    <source>
    </source>
</evidence>
<evidence type="ECO:0000269" key="5">
    <source>
    </source>
</evidence>
<evidence type="ECO:0000269" key="6">
    <source>
    </source>
</evidence>
<evidence type="ECO:0000269" key="7">
    <source>
    </source>
</evidence>
<evidence type="ECO:0000269" key="8">
    <source>
    </source>
</evidence>
<evidence type="ECO:0000303" key="9">
    <source>
    </source>
</evidence>
<evidence type="ECO:0000305" key="10"/>
<evidence type="ECO:0000305" key="11">
    <source>
    </source>
</evidence>
<evidence type="ECO:0000312" key="12">
    <source>
        <dbReference type="SGD" id="S000000221"/>
    </source>
</evidence>
<feature type="chain" id="PRO_0000120770" description="Importin subunit beta-2">
    <location>
        <begin position="1"/>
        <end position="918"/>
    </location>
</feature>
<feature type="repeat" description="HEAT 1" evidence="1">
    <location>
        <begin position="11"/>
        <end position="38"/>
    </location>
</feature>
<feature type="repeat" description="HEAT 2" evidence="1">
    <location>
        <begin position="43"/>
        <end position="92"/>
    </location>
</feature>
<feature type="repeat" description="HEAT 3" evidence="1">
    <location>
        <begin position="103"/>
        <end position="137"/>
    </location>
</feature>
<feature type="repeat" description="HEAT 4" evidence="1">
    <location>
        <begin position="145"/>
        <end position="181"/>
    </location>
</feature>
<feature type="repeat" description="HEAT 5" evidence="1">
    <location>
        <begin position="190"/>
        <end position="222"/>
    </location>
</feature>
<feature type="repeat" description="HEAT 6" evidence="1">
    <location>
        <begin position="235"/>
        <end position="263"/>
    </location>
</feature>
<feature type="repeat" description="HEAT 7" evidence="1">
    <location>
        <begin position="275"/>
        <end position="303"/>
    </location>
</feature>
<feature type="repeat" description="HEAT 8" evidence="1">
    <location>
        <begin position="320"/>
        <end position="413"/>
    </location>
</feature>
<feature type="repeat" description="HEAT 9" evidence="1">
    <location>
        <begin position="421"/>
        <end position="449"/>
    </location>
</feature>
<feature type="repeat" description="HEAT 10" evidence="1">
    <location>
        <begin position="461"/>
        <end position="488"/>
    </location>
</feature>
<feature type="repeat" description="HEAT 11" evidence="1">
    <location>
        <begin position="501"/>
        <end position="534"/>
    </location>
</feature>
<feature type="repeat" description="HEAT 12" evidence="1">
    <location>
        <begin position="542"/>
        <end position="577"/>
    </location>
</feature>
<feature type="repeat" description="HEAT 13" evidence="1">
    <location>
        <begin position="583"/>
        <end position="620"/>
    </location>
</feature>
<feature type="repeat" description="HEAT 14" evidence="1">
    <location>
        <begin position="628"/>
        <end position="678"/>
    </location>
</feature>
<feature type="repeat" description="HEAT 15" evidence="1">
    <location>
        <begin position="694"/>
        <end position="725"/>
    </location>
</feature>
<feature type="repeat" description="HEAT 17" evidence="1">
    <location>
        <begin position="777"/>
        <end position="814"/>
    </location>
</feature>
<feature type="repeat" description="HEAT 18" evidence="1">
    <location>
        <begin position="825"/>
        <end position="858"/>
    </location>
</feature>
<feature type="repeat" description="HEAT 19" evidence="1">
    <location>
        <begin position="867"/>
        <end position="900"/>
    </location>
</feature>
<feature type="region of interest" description="Disordered" evidence="2">
    <location>
        <begin position="361"/>
        <end position="395"/>
    </location>
</feature>
<feature type="compositionally biased region" description="Acidic residues" evidence="2">
    <location>
        <begin position="372"/>
        <end position="393"/>
    </location>
</feature>
<name>IMB2_YEAST</name>
<sequence length="918" mass="103681">MASTWKPAEDYVLQLATLLQNCMSPNPEIRNNAMEAMENFQLQPEFLNYLCYILIEGESDDVLKQHYSLQDLQNNRATAGMLLKNSMLGGNNLIKSNSHDLGYVKSNIIHGLYNSNNNLVSNVTGIVITTLFSTYYRQHRDDPTGLQMLYQLLELTSNGNEPSIKALSKIMEDSAQFFQLEWSGNTKPMEALLDSFFRFISNPNFSPVIRSESVKCINTVIPLQTQSFIVRLDKFLEIIFQLAQNDENDLVRAQICISFSFLLEFRPDKLVSHLDGIVQFMLHLITTVNEEKVAIEACEFLHAFATSPNIPEHILQPYVKDIVPILLSKMVYNEESIVLLEASNDDDAFLEDKDEDIKPIAPRIVKKKEAGNGEDADDNEDDDDDDDDEDGDVDTQWNLRKCSAATLDVMTNILPHQVMDIAFPFLREHLGSDRWFIREATILALGAMAEGGMKYFNDGLPALIPFLVEQLNDKWAPVRKMTCWTLSRFSPWILQDHTEFLIPVLEPIINTLMDKKKDVQEAAISSVAVFIENADSELVETLFYSQLLTSFDKCLKYYKKKNLIILYDAIGRFAEKCALDETAMQIILPPLIEKWALLSDSDKELWPLLECLSCVASSLGERFMPMAPEVYNRAFRILCHCVELEAKSHQDPTIVVPEKDFIITSLDLIDGLVQGLGAHSQDLLFPQGTKDLTILKIMLECLQDPVHEVRQSCFALLGDIVYFFNSELVIGNLEDFLKLIGTEIMHNDDSDGTPAVINAIWALGLISERIDLNTYIIDMSRIILDLFTTNTQIVDSSVMENLSVTIGKMGLTHPEVFSSGAFANDSNWNKWCLSVNALDDVEEKSSAYMGFLKIINLTSTEVTMSNDTIHKIVTGLSSNVEANVFAQEIYTFLMNHSAQISAINFTPDEISFLQQFTS</sequence>
<protein>
    <recommendedName>
        <fullName evidence="1">Importin subunit beta-2</fullName>
    </recommendedName>
    <alternativeName>
        <fullName>Importin-104</fullName>
    </alternativeName>
    <alternativeName>
        <fullName>Karyopherin subunit beta-2</fullName>
    </alternativeName>
    <alternativeName>
        <fullName evidence="9">Karyopherin-104</fullName>
    </alternativeName>
    <alternativeName>
        <fullName evidence="1">Transportin</fullName>
        <shortName evidence="1">TRN</shortName>
    </alternativeName>
</protein>
<accession>P38217</accession>
<accession>D6VQ19</accession>
<gene>
    <name evidence="9" type="primary">KAP104</name>
    <name evidence="12" type="ordered locus">YBR017C</name>
    <name type="ORF">YBR0224</name>
</gene>
<comment type="function">
    <text evidence="3 5 6 8 11">Functions in nuclear protein import as nuclear transport receptor. Serves as receptor for arginine/glycine-rich nuclear localization signals (rg-NLS) and PY-NLS in cargo substrates. Its predominant cargo substrate seems to be mRNA-binding proteins. Required for nuclear transport of NAB2, HRP1/NAB4 and TFG2. Mediates docking of the importin/substrate complex to the nuclear pore complex (NPC) through binding to repeat-containing nucleoporins (PubMed:10506153, PubMed:19366694, PubMed:8849456, PubMed:9488461). The complex is subsequently translocated through the pore by an energy requiring, Ran-dependent mechanism (PubMed:11423015). At the nucleoplasmic side of the NPC, GTP-Ran binding leads to release of the cargo. Efficient GTP-Ran-mediated substrate release requires RNA (PubMed:10506153). The importin is re-exported from the nucleus to the cytoplasm where GTP hydrolysis releases Ran from importin. The directionality of nuclear import is thought to be conferred by an asymmetric distribution of the GTP- and GDP-bound forms of Ran between the cytoplasm and nucleus (PubMed:11423015).</text>
</comment>
<comment type="subunit">
    <text evidence="3 5 6 7 8">Interacts with Ran (GSP1) (PubMed:9321403, PubMed:10506153); interacts specifically with the GTP-bound form of Ran (GTP-Ran), protecting it from GTP hydrolysis and nucleotide exchange (PubMed:9321403). Interacts with nucleoporins NUP1, NUP100 and NUP116 (PubMed:8849456). Interacts with NAB2 and HRP1/NAB4; via their rg-NLS (PubMed:10506153, PubMed:9488461). Interacts with TFG2; via its PY-NLS (PubMed:19366694).</text>
</comment>
<comment type="interaction">
    <interactant intactId="EBI-9152">
        <id>P38217</id>
    </interactant>
    <interactant intactId="EBI-6482">
        <id>P38333</id>
        <label>ENP1</label>
    </interactant>
    <organismsDiffer>false</organismsDiffer>
    <experiments>2</experiments>
</comment>
<comment type="interaction">
    <interactant intactId="EBI-9152">
        <id>P38217</id>
    </interactant>
    <interactant intactId="EBI-11783">
        <id>Q99383</id>
        <label>HRP1</label>
    </interactant>
    <organismsDiffer>false</organismsDiffer>
    <experiments>5</experiments>
</comment>
<comment type="interaction">
    <interactant intactId="EBI-9152">
        <id>P38217</id>
    </interactant>
    <interactant intactId="EBI-11770">
        <id>P32505</id>
        <label>NAB2</label>
    </interactant>
    <organismsDiffer>false</organismsDiffer>
    <experiments>5</experiments>
</comment>
<comment type="interaction">
    <interactant intactId="EBI-9152">
        <id>P38217</id>
    </interactant>
    <interactant intactId="EBI-18916">
        <id>P41896</id>
        <label>TFG2</label>
    </interactant>
    <organismsDiffer>false</organismsDiffer>
    <experiments>2</experiments>
</comment>
<comment type="subcellular location">
    <subcellularLocation>
        <location evidence="6">Cytoplasm</location>
    </subcellularLocation>
    <subcellularLocation>
        <location evidence="6">Nucleus</location>
        <location evidence="6">Nuclear pore complex</location>
    </subcellularLocation>
    <subcellularLocation>
        <location evidence="6">Nucleus</location>
    </subcellularLocation>
    <text evidence="6">Predominantly cytoplasmic.</text>
</comment>
<comment type="miscellaneous">
    <text evidence="6">Binds to nucleoporin FxFG but not PSFG repeat regions.</text>
</comment>
<comment type="miscellaneous">
    <text evidence="4">Present with 2130 molecules/cell in log phase SD medium.</text>
</comment>
<comment type="similarity">
    <text evidence="10">Belongs to the importin beta family. Importin beta-2 subfamily.</text>
</comment>
<keyword id="KW-0963">Cytoplasm</keyword>
<keyword id="KW-0509">mRNA transport</keyword>
<keyword id="KW-0906">Nuclear pore complex</keyword>
<keyword id="KW-0539">Nucleus</keyword>
<keyword id="KW-0653">Protein transport</keyword>
<keyword id="KW-1185">Reference proteome</keyword>
<keyword id="KW-0677">Repeat</keyword>
<keyword id="KW-0811">Translocation</keyword>
<keyword id="KW-0813">Transport</keyword>
<organism>
    <name type="scientific">Saccharomyces cerevisiae (strain ATCC 204508 / S288c)</name>
    <name type="common">Baker's yeast</name>
    <dbReference type="NCBI Taxonomy" id="559292"/>
    <lineage>
        <taxon>Eukaryota</taxon>
        <taxon>Fungi</taxon>
        <taxon>Dikarya</taxon>
        <taxon>Ascomycota</taxon>
        <taxon>Saccharomycotina</taxon>
        <taxon>Saccharomycetes</taxon>
        <taxon>Saccharomycetales</taxon>
        <taxon>Saccharomycetaceae</taxon>
        <taxon>Saccharomyces</taxon>
    </lineage>
</organism>